<name>THIO5_DICDI</name>
<evidence type="ECO:0000250" key="1"/>
<evidence type="ECO:0000255" key="2">
    <source>
        <dbReference type="PROSITE-ProRule" id="PRU00691"/>
    </source>
</evidence>
<evidence type="ECO:0000305" key="3"/>
<sequence length="105" mass="11715">MYKEPKNESEYEAELKNAPVAVVYLTATWCGPCRAIAPVFTNISNAPENSKITFFKVDVDALKKLPVCESLQGVPTFIAYRNGEEQERFSGANKVALENMVKKLL</sequence>
<feature type="chain" id="PRO_0000326535" description="Putative thioredoxin-5">
    <location>
        <begin position="1"/>
        <end position="105"/>
    </location>
</feature>
<feature type="domain" description="Thioredoxin" evidence="2">
    <location>
        <begin position="1"/>
        <end position="104"/>
    </location>
</feature>
<feature type="active site" description="Nucleophile" evidence="1">
    <location>
        <position position="30"/>
    </location>
</feature>
<feature type="active site" description="Nucleophile" evidence="1">
    <location>
        <position position="33"/>
    </location>
</feature>
<feature type="site" description="Contributes to redox potential value" evidence="1">
    <location>
        <position position="31"/>
    </location>
</feature>
<feature type="site" description="Contributes to redox potential value" evidence="1">
    <location>
        <position position="32"/>
    </location>
</feature>
<feature type="disulfide bond" description="Redox-active" evidence="2">
    <location>
        <begin position="30"/>
        <end position="33"/>
    </location>
</feature>
<accession>Q54KN7</accession>
<comment type="function">
    <text evidence="1">Participates in various redox reactions through the reversible oxidation of its active center dithiol to a disulfide and catalyzes dithiol-disulfide exchange reactions.</text>
</comment>
<comment type="similarity">
    <text evidence="3">Belongs to the thioredoxin family.</text>
</comment>
<dbReference type="EMBL" id="AAFI02000099">
    <property type="protein sequence ID" value="EAL63815.1"/>
    <property type="molecule type" value="Genomic_DNA"/>
</dbReference>
<dbReference type="RefSeq" id="XP_637320.1">
    <property type="nucleotide sequence ID" value="XM_632228.1"/>
</dbReference>
<dbReference type="SMR" id="Q54KN7"/>
<dbReference type="PaxDb" id="44689-DDB0237674"/>
<dbReference type="EnsemblProtists" id="EAL63815">
    <property type="protein sequence ID" value="EAL63815"/>
    <property type="gene ID" value="DDB_G0287227"/>
</dbReference>
<dbReference type="GeneID" id="8626018"/>
<dbReference type="KEGG" id="ddi:DDB_G0287227"/>
<dbReference type="dictyBase" id="DDB_G0287227">
    <property type="gene designation" value="trxE"/>
</dbReference>
<dbReference type="VEuPathDB" id="AmoebaDB:DDB_G0287227"/>
<dbReference type="eggNOG" id="KOG0907">
    <property type="taxonomic scope" value="Eukaryota"/>
</dbReference>
<dbReference type="HOGENOM" id="CLU_090389_14_5_1"/>
<dbReference type="InParanoid" id="Q54KN7"/>
<dbReference type="OMA" id="RIICCYG"/>
<dbReference type="PhylomeDB" id="Q54KN7"/>
<dbReference type="Reactome" id="R-DDI-9013418">
    <property type="pathway name" value="RHOBTB2 GTPase cycle"/>
</dbReference>
<dbReference type="Reactome" id="R-DDI-9013420">
    <property type="pathway name" value="RHOU GTPase cycle"/>
</dbReference>
<dbReference type="Reactome" id="R-DDI-9013422">
    <property type="pathway name" value="RHOBTB1 GTPase cycle"/>
</dbReference>
<dbReference type="Reactome" id="R-DDI-9013424">
    <property type="pathway name" value="RHOV GTPase cycle"/>
</dbReference>
<dbReference type="PRO" id="PR:Q54KN7"/>
<dbReference type="Proteomes" id="UP000002195">
    <property type="component" value="Chromosome 5"/>
</dbReference>
<dbReference type="GO" id="GO:0005829">
    <property type="term" value="C:cytosol"/>
    <property type="evidence" value="ECO:0000318"/>
    <property type="project" value="GO_Central"/>
</dbReference>
<dbReference type="GO" id="GO:0015036">
    <property type="term" value="F:disulfide oxidoreductase activity"/>
    <property type="evidence" value="ECO:0000250"/>
    <property type="project" value="dictyBase"/>
</dbReference>
<dbReference type="GO" id="GO:0003756">
    <property type="term" value="F:protein disulfide isomerase activity"/>
    <property type="evidence" value="ECO:0000250"/>
    <property type="project" value="dictyBase"/>
</dbReference>
<dbReference type="GO" id="GO:0015035">
    <property type="term" value="F:protein-disulfide reductase activity"/>
    <property type="evidence" value="ECO:0000318"/>
    <property type="project" value="GO_Central"/>
</dbReference>
<dbReference type="CDD" id="cd02947">
    <property type="entry name" value="TRX_family"/>
    <property type="match status" value="1"/>
</dbReference>
<dbReference type="FunFam" id="3.40.30.10:FF:000245">
    <property type="entry name" value="Thioredoxin"/>
    <property type="match status" value="1"/>
</dbReference>
<dbReference type="Gene3D" id="3.40.30.10">
    <property type="entry name" value="Glutaredoxin"/>
    <property type="match status" value="1"/>
</dbReference>
<dbReference type="InterPro" id="IPR005746">
    <property type="entry name" value="Thioredoxin"/>
</dbReference>
<dbReference type="InterPro" id="IPR036249">
    <property type="entry name" value="Thioredoxin-like_sf"/>
</dbReference>
<dbReference type="InterPro" id="IPR017937">
    <property type="entry name" value="Thioredoxin_CS"/>
</dbReference>
<dbReference type="InterPro" id="IPR013766">
    <property type="entry name" value="Thioredoxin_domain"/>
</dbReference>
<dbReference type="PANTHER" id="PTHR46115">
    <property type="entry name" value="THIOREDOXIN-LIKE PROTEIN 1"/>
    <property type="match status" value="1"/>
</dbReference>
<dbReference type="Pfam" id="PF00085">
    <property type="entry name" value="Thioredoxin"/>
    <property type="match status" value="1"/>
</dbReference>
<dbReference type="PIRSF" id="PIRSF000077">
    <property type="entry name" value="Thioredoxin"/>
    <property type="match status" value="1"/>
</dbReference>
<dbReference type="SUPFAM" id="SSF52833">
    <property type="entry name" value="Thioredoxin-like"/>
    <property type="match status" value="1"/>
</dbReference>
<dbReference type="PROSITE" id="PS00194">
    <property type="entry name" value="THIOREDOXIN_1"/>
    <property type="match status" value="1"/>
</dbReference>
<dbReference type="PROSITE" id="PS51352">
    <property type="entry name" value="THIOREDOXIN_2"/>
    <property type="match status" value="1"/>
</dbReference>
<gene>
    <name type="primary">trxE</name>
    <name type="ORF">DDB_G0287227</name>
</gene>
<keyword id="KW-1015">Disulfide bond</keyword>
<keyword id="KW-0249">Electron transport</keyword>
<keyword id="KW-0676">Redox-active center</keyword>
<keyword id="KW-1185">Reference proteome</keyword>
<keyword id="KW-0813">Transport</keyword>
<proteinExistence type="inferred from homology"/>
<organism>
    <name type="scientific">Dictyostelium discoideum</name>
    <name type="common">Social amoeba</name>
    <dbReference type="NCBI Taxonomy" id="44689"/>
    <lineage>
        <taxon>Eukaryota</taxon>
        <taxon>Amoebozoa</taxon>
        <taxon>Evosea</taxon>
        <taxon>Eumycetozoa</taxon>
        <taxon>Dictyostelia</taxon>
        <taxon>Dictyosteliales</taxon>
        <taxon>Dictyosteliaceae</taxon>
        <taxon>Dictyostelium</taxon>
    </lineage>
</organism>
<protein>
    <recommendedName>
        <fullName>Putative thioredoxin-5</fullName>
        <shortName>Trx-5</shortName>
    </recommendedName>
</protein>
<reference key="1">
    <citation type="journal article" date="2005" name="Nature">
        <title>The genome of the social amoeba Dictyostelium discoideum.</title>
        <authorList>
            <person name="Eichinger L."/>
            <person name="Pachebat J.A."/>
            <person name="Gloeckner G."/>
            <person name="Rajandream M.A."/>
            <person name="Sucgang R."/>
            <person name="Berriman M."/>
            <person name="Song J."/>
            <person name="Olsen R."/>
            <person name="Szafranski K."/>
            <person name="Xu Q."/>
            <person name="Tunggal B."/>
            <person name="Kummerfeld S."/>
            <person name="Madera M."/>
            <person name="Konfortov B.A."/>
            <person name="Rivero F."/>
            <person name="Bankier A.T."/>
            <person name="Lehmann R."/>
            <person name="Hamlin N."/>
            <person name="Davies R."/>
            <person name="Gaudet P."/>
            <person name="Fey P."/>
            <person name="Pilcher K."/>
            <person name="Chen G."/>
            <person name="Saunders D."/>
            <person name="Sodergren E.J."/>
            <person name="Davis P."/>
            <person name="Kerhornou A."/>
            <person name="Nie X."/>
            <person name="Hall N."/>
            <person name="Anjard C."/>
            <person name="Hemphill L."/>
            <person name="Bason N."/>
            <person name="Farbrother P."/>
            <person name="Desany B."/>
            <person name="Just E."/>
            <person name="Morio T."/>
            <person name="Rost R."/>
            <person name="Churcher C.M."/>
            <person name="Cooper J."/>
            <person name="Haydock S."/>
            <person name="van Driessche N."/>
            <person name="Cronin A."/>
            <person name="Goodhead I."/>
            <person name="Muzny D.M."/>
            <person name="Mourier T."/>
            <person name="Pain A."/>
            <person name="Lu M."/>
            <person name="Harper D."/>
            <person name="Lindsay R."/>
            <person name="Hauser H."/>
            <person name="James K.D."/>
            <person name="Quiles M."/>
            <person name="Madan Babu M."/>
            <person name="Saito T."/>
            <person name="Buchrieser C."/>
            <person name="Wardroper A."/>
            <person name="Felder M."/>
            <person name="Thangavelu M."/>
            <person name="Johnson D."/>
            <person name="Knights A."/>
            <person name="Loulseged H."/>
            <person name="Mungall K.L."/>
            <person name="Oliver K."/>
            <person name="Price C."/>
            <person name="Quail M.A."/>
            <person name="Urushihara H."/>
            <person name="Hernandez J."/>
            <person name="Rabbinowitsch E."/>
            <person name="Steffen D."/>
            <person name="Sanders M."/>
            <person name="Ma J."/>
            <person name="Kohara Y."/>
            <person name="Sharp S."/>
            <person name="Simmonds M.N."/>
            <person name="Spiegler S."/>
            <person name="Tivey A."/>
            <person name="Sugano S."/>
            <person name="White B."/>
            <person name="Walker D."/>
            <person name="Woodward J.R."/>
            <person name="Winckler T."/>
            <person name="Tanaka Y."/>
            <person name="Shaulsky G."/>
            <person name="Schleicher M."/>
            <person name="Weinstock G.M."/>
            <person name="Rosenthal A."/>
            <person name="Cox E.C."/>
            <person name="Chisholm R.L."/>
            <person name="Gibbs R.A."/>
            <person name="Loomis W.F."/>
            <person name="Platzer M."/>
            <person name="Kay R.R."/>
            <person name="Williams J.G."/>
            <person name="Dear P.H."/>
            <person name="Noegel A.A."/>
            <person name="Barrell B.G."/>
            <person name="Kuspa A."/>
        </authorList>
    </citation>
    <scope>NUCLEOTIDE SEQUENCE [LARGE SCALE GENOMIC DNA]</scope>
    <source>
        <strain>AX4</strain>
    </source>
</reference>